<feature type="chain" id="PRO_1000186985" description="3-phenylpropionate/cinnamic acid dioxygenase ferredoxin--NAD(+) reductase component">
    <location>
        <begin position="1"/>
        <end position="400"/>
    </location>
</feature>
<feature type="binding site" evidence="1">
    <location>
        <begin position="5"/>
        <end position="36"/>
    </location>
    <ligand>
        <name>FAD</name>
        <dbReference type="ChEBI" id="CHEBI:57692"/>
    </ligand>
</feature>
<feature type="binding site" evidence="1">
    <location>
        <begin position="146"/>
        <end position="174"/>
    </location>
    <ligand>
        <name>NAD(+)</name>
        <dbReference type="ChEBI" id="CHEBI:57540"/>
    </ligand>
</feature>
<dbReference type="EC" id="1.18.1.3" evidence="1"/>
<dbReference type="EMBL" id="CP000946">
    <property type="protein sequence ID" value="ACA76802.1"/>
    <property type="molecule type" value="Genomic_DNA"/>
</dbReference>
<dbReference type="RefSeq" id="WP_000660788.1">
    <property type="nucleotide sequence ID" value="NZ_MTFT01000002.1"/>
</dbReference>
<dbReference type="SMR" id="B1IVT5"/>
<dbReference type="KEGG" id="ecl:EcolC_1135"/>
<dbReference type="HOGENOM" id="CLU_003291_4_0_6"/>
<dbReference type="UniPathway" id="UPA00714"/>
<dbReference type="GO" id="GO:0005737">
    <property type="term" value="C:cytoplasm"/>
    <property type="evidence" value="ECO:0007669"/>
    <property type="project" value="TreeGrafter"/>
</dbReference>
<dbReference type="GO" id="GO:0008695">
    <property type="term" value="F:3-phenylpropionate dioxygenase activity"/>
    <property type="evidence" value="ECO:0007669"/>
    <property type="project" value="UniProtKB-UniRule"/>
</dbReference>
<dbReference type="GO" id="GO:0008860">
    <property type="term" value="F:ferredoxin-NAD+ reductase activity"/>
    <property type="evidence" value="ECO:0007669"/>
    <property type="project" value="UniProtKB-EC"/>
</dbReference>
<dbReference type="GO" id="GO:0016651">
    <property type="term" value="F:oxidoreductase activity, acting on NAD(P)H"/>
    <property type="evidence" value="ECO:0007669"/>
    <property type="project" value="TreeGrafter"/>
</dbReference>
<dbReference type="GO" id="GO:0019380">
    <property type="term" value="P:3-phenylpropionate catabolic process"/>
    <property type="evidence" value="ECO:0007669"/>
    <property type="project" value="UniProtKB-UniRule"/>
</dbReference>
<dbReference type="FunFam" id="3.30.390.30:FF:000010">
    <property type="entry name" value="3-phenylpropionate/cinnamic acid dioxygenase ferredoxin--NAD(+) reductase component"/>
    <property type="match status" value="1"/>
</dbReference>
<dbReference type="FunFam" id="3.50.50.60:FF:000088">
    <property type="entry name" value="3-phenylpropionate/cinnamic acid dioxygenase ferredoxin--NAD(+) reductase component"/>
    <property type="match status" value="1"/>
</dbReference>
<dbReference type="Gene3D" id="3.30.390.30">
    <property type="match status" value="1"/>
</dbReference>
<dbReference type="Gene3D" id="3.50.50.60">
    <property type="entry name" value="FAD/NAD(P)-binding domain"/>
    <property type="match status" value="2"/>
</dbReference>
<dbReference type="HAMAP" id="MF_01651">
    <property type="entry name" value="HcaD"/>
    <property type="match status" value="1"/>
</dbReference>
<dbReference type="InterPro" id="IPR050446">
    <property type="entry name" value="FAD-oxidoreductase/Apoptosis"/>
</dbReference>
<dbReference type="InterPro" id="IPR036188">
    <property type="entry name" value="FAD/NAD-bd_sf"/>
</dbReference>
<dbReference type="InterPro" id="IPR023753">
    <property type="entry name" value="FAD/NAD-binding_dom"/>
</dbReference>
<dbReference type="InterPro" id="IPR016156">
    <property type="entry name" value="FAD/NAD-linked_Rdtase_dimer_sf"/>
</dbReference>
<dbReference type="InterPro" id="IPR023744">
    <property type="entry name" value="HcaD"/>
</dbReference>
<dbReference type="InterPro" id="IPR028202">
    <property type="entry name" value="Reductase_C"/>
</dbReference>
<dbReference type="InterPro" id="IPR053382">
    <property type="entry name" value="Ring-hydroxylating_dioxygenase"/>
</dbReference>
<dbReference type="NCBIfam" id="NF042949">
    <property type="entry name" value="3PPDioc_HcaD"/>
    <property type="match status" value="1"/>
</dbReference>
<dbReference type="NCBIfam" id="NF007286">
    <property type="entry name" value="PRK09754.1"/>
    <property type="match status" value="1"/>
</dbReference>
<dbReference type="PANTHER" id="PTHR43557">
    <property type="entry name" value="APOPTOSIS-INDUCING FACTOR 1"/>
    <property type="match status" value="1"/>
</dbReference>
<dbReference type="PANTHER" id="PTHR43557:SF2">
    <property type="entry name" value="RIESKE DOMAIN-CONTAINING PROTEIN-RELATED"/>
    <property type="match status" value="1"/>
</dbReference>
<dbReference type="Pfam" id="PF07992">
    <property type="entry name" value="Pyr_redox_2"/>
    <property type="match status" value="1"/>
</dbReference>
<dbReference type="Pfam" id="PF14759">
    <property type="entry name" value="Reductase_C"/>
    <property type="match status" value="1"/>
</dbReference>
<dbReference type="PRINTS" id="PR00368">
    <property type="entry name" value="FADPNR"/>
</dbReference>
<dbReference type="PRINTS" id="PR00411">
    <property type="entry name" value="PNDRDTASEI"/>
</dbReference>
<dbReference type="SUPFAM" id="SSF51905">
    <property type="entry name" value="FAD/NAD(P)-binding domain"/>
    <property type="match status" value="1"/>
</dbReference>
<dbReference type="SUPFAM" id="SSF55424">
    <property type="entry name" value="FAD/NAD-linked reductases, dimerisation (C-terminal) domain"/>
    <property type="match status" value="1"/>
</dbReference>
<reference key="1">
    <citation type="submission" date="2008-02" db="EMBL/GenBank/DDBJ databases">
        <title>Complete sequence of Escherichia coli C str. ATCC 8739.</title>
        <authorList>
            <person name="Copeland A."/>
            <person name="Lucas S."/>
            <person name="Lapidus A."/>
            <person name="Glavina del Rio T."/>
            <person name="Dalin E."/>
            <person name="Tice H."/>
            <person name="Bruce D."/>
            <person name="Goodwin L."/>
            <person name="Pitluck S."/>
            <person name="Kiss H."/>
            <person name="Brettin T."/>
            <person name="Detter J.C."/>
            <person name="Han C."/>
            <person name="Kuske C.R."/>
            <person name="Schmutz J."/>
            <person name="Larimer F."/>
            <person name="Land M."/>
            <person name="Hauser L."/>
            <person name="Kyrpides N."/>
            <person name="Mikhailova N."/>
            <person name="Ingram L."/>
            <person name="Richardson P."/>
        </authorList>
    </citation>
    <scope>NUCLEOTIDE SEQUENCE [LARGE SCALE GENOMIC DNA]</scope>
    <source>
        <strain>ATCC 8739 / DSM 1576 / NBRC 3972 / NCIMB 8545 / WDCM 00012 / Crooks</strain>
    </source>
</reference>
<name>HCAD_ECOLC</name>
<gene>
    <name evidence="1" type="primary">hcaD</name>
    <name type="ordered locus">EcolC_1135</name>
</gene>
<sequence>MKEKTIIIVGGGQAAAMAAASLRQQGFTGELHLFSDERHLPYERPPLSKSMLLEDSPQLQQVLPANWWQENNVHLHSGVTIKTLGRDTRELVLTNGESWHWDQLFIATGAAARPLPLLDALGERCFTLRHAGDAARLREVLQPERSVVIIGAGTIGLELAASATQRRCKVTVIELAATVMGRNAPPPVQRYLLQRHQQAGVRILLNNAIEHVVDGEKVELTLQSGETLQADVVIYGIGISANEQLAREANLDTANGIVIDEACRTCDPAIFAGGDVAITRLDNGALHRCESWENANNQAQIAAAAMLGLPLPLLPPPWFWSDQYSDNLQFIGDMRGDDWLCRGNPETQKAIWFNLQNGVLIGAVTLNQGREIRPIRKWIQSGKTFDAKLLIDENIALKSL</sequence>
<keyword id="KW-0058">Aromatic hydrocarbons catabolism</keyword>
<keyword id="KW-0274">FAD</keyword>
<keyword id="KW-0285">Flavoprotein</keyword>
<keyword id="KW-0520">NAD</keyword>
<keyword id="KW-0560">Oxidoreductase</keyword>
<proteinExistence type="inferred from homology"/>
<evidence type="ECO:0000255" key="1">
    <source>
        <dbReference type="HAMAP-Rule" id="MF_01651"/>
    </source>
</evidence>
<protein>
    <recommendedName>
        <fullName evidence="1">3-phenylpropionate/cinnamic acid dioxygenase ferredoxin--NAD(+) reductase component</fullName>
        <ecNumber evidence="1">1.18.1.3</ecNumber>
    </recommendedName>
</protein>
<organism>
    <name type="scientific">Escherichia coli (strain ATCC 8739 / DSM 1576 / NBRC 3972 / NCIMB 8545 / WDCM 00012 / Crooks)</name>
    <dbReference type="NCBI Taxonomy" id="481805"/>
    <lineage>
        <taxon>Bacteria</taxon>
        <taxon>Pseudomonadati</taxon>
        <taxon>Pseudomonadota</taxon>
        <taxon>Gammaproteobacteria</taxon>
        <taxon>Enterobacterales</taxon>
        <taxon>Enterobacteriaceae</taxon>
        <taxon>Escherichia</taxon>
    </lineage>
</organism>
<comment type="function">
    <text evidence="1">Part of the multicomponent 3-phenylpropionate dioxygenase, that converts 3-phenylpropionic acid (PP) and cinnamic acid (CI) into 3-phenylpropionate-dihydrodiol (PP-dihydrodiol) and cinnamic acid-dihydrodiol (CI-dihydrodiol), respectively.</text>
</comment>
<comment type="catalytic activity">
    <reaction evidence="1">
        <text>2 reduced [2Fe-2S]-[ferredoxin] + NAD(+) + H(+) = 2 oxidized [2Fe-2S]-[ferredoxin] + NADH</text>
        <dbReference type="Rhea" id="RHEA:16521"/>
        <dbReference type="Rhea" id="RHEA-COMP:10000"/>
        <dbReference type="Rhea" id="RHEA-COMP:10001"/>
        <dbReference type="ChEBI" id="CHEBI:15378"/>
        <dbReference type="ChEBI" id="CHEBI:33737"/>
        <dbReference type="ChEBI" id="CHEBI:33738"/>
        <dbReference type="ChEBI" id="CHEBI:57540"/>
        <dbReference type="ChEBI" id="CHEBI:57945"/>
        <dbReference type="EC" id="1.18.1.3"/>
    </reaction>
</comment>
<comment type="cofactor">
    <cofactor evidence="1">
        <name>FAD</name>
        <dbReference type="ChEBI" id="CHEBI:57692"/>
    </cofactor>
</comment>
<comment type="pathway">
    <text evidence="1">Aromatic compound metabolism; 3-phenylpropanoate degradation.</text>
</comment>
<comment type="subunit">
    <text evidence="1">This dioxygenase system consists of four proteins: the two subunits of the hydroxylase component (HcaE and HcaF), a ferredoxin (HcaC) and a ferredoxin reductase (HcaD).</text>
</comment>
<comment type="similarity">
    <text evidence="1">Belongs to the bacterial ring-hydroxylating dioxygenase ferredoxin reductase family.</text>
</comment>
<accession>B1IVT5</accession>